<gene>
    <name evidence="1" type="primary">rplT</name>
    <name evidence="1" type="synonym">rpl20</name>
    <name type="ordered locus">PMT9312_1754</name>
</gene>
<organism>
    <name type="scientific">Prochlorococcus marinus (strain MIT 9312)</name>
    <dbReference type="NCBI Taxonomy" id="74546"/>
    <lineage>
        <taxon>Bacteria</taxon>
        <taxon>Bacillati</taxon>
        <taxon>Cyanobacteriota</taxon>
        <taxon>Cyanophyceae</taxon>
        <taxon>Synechococcales</taxon>
        <taxon>Prochlorococcaceae</taxon>
        <taxon>Prochlorococcus</taxon>
    </lineage>
</organism>
<name>RL20_PROM9</name>
<sequence length="115" mass="13436">MARVKRGNIARKRRNKILNLAKGFRGGNKNLFRTANQRVMKALCNAYRDRRRRKRDFRRLWISRINASARINGTNYSKLINGMKNSEIIINRKMLAQLALNDPKCFEKIVSSVSN</sequence>
<accession>Q317Y0</accession>
<feature type="chain" id="PRO_1000049036" description="Large ribosomal subunit protein bL20">
    <location>
        <begin position="1"/>
        <end position="115"/>
    </location>
</feature>
<dbReference type="EMBL" id="CP000111">
    <property type="protein sequence ID" value="ABB50815.1"/>
    <property type="molecule type" value="Genomic_DNA"/>
</dbReference>
<dbReference type="RefSeq" id="WP_011377296.1">
    <property type="nucleotide sequence ID" value="NC_007577.1"/>
</dbReference>
<dbReference type="SMR" id="Q317Y0"/>
<dbReference type="STRING" id="74546.PMT9312_1754"/>
<dbReference type="KEGG" id="pmi:PMT9312_1754"/>
<dbReference type="eggNOG" id="COG0292">
    <property type="taxonomic scope" value="Bacteria"/>
</dbReference>
<dbReference type="HOGENOM" id="CLU_123265_1_0_3"/>
<dbReference type="OrthoDB" id="9808966at2"/>
<dbReference type="Proteomes" id="UP000002715">
    <property type="component" value="Chromosome"/>
</dbReference>
<dbReference type="GO" id="GO:1990904">
    <property type="term" value="C:ribonucleoprotein complex"/>
    <property type="evidence" value="ECO:0007669"/>
    <property type="project" value="UniProtKB-KW"/>
</dbReference>
<dbReference type="GO" id="GO:0005840">
    <property type="term" value="C:ribosome"/>
    <property type="evidence" value="ECO:0007669"/>
    <property type="project" value="UniProtKB-KW"/>
</dbReference>
<dbReference type="GO" id="GO:0019843">
    <property type="term" value="F:rRNA binding"/>
    <property type="evidence" value="ECO:0007669"/>
    <property type="project" value="UniProtKB-UniRule"/>
</dbReference>
<dbReference type="GO" id="GO:0003735">
    <property type="term" value="F:structural constituent of ribosome"/>
    <property type="evidence" value="ECO:0007669"/>
    <property type="project" value="InterPro"/>
</dbReference>
<dbReference type="GO" id="GO:0000027">
    <property type="term" value="P:ribosomal large subunit assembly"/>
    <property type="evidence" value="ECO:0007669"/>
    <property type="project" value="UniProtKB-UniRule"/>
</dbReference>
<dbReference type="GO" id="GO:0006412">
    <property type="term" value="P:translation"/>
    <property type="evidence" value="ECO:0007669"/>
    <property type="project" value="InterPro"/>
</dbReference>
<dbReference type="CDD" id="cd07026">
    <property type="entry name" value="Ribosomal_L20"/>
    <property type="match status" value="1"/>
</dbReference>
<dbReference type="FunFam" id="1.10.1900.20:FF:000001">
    <property type="entry name" value="50S ribosomal protein L20"/>
    <property type="match status" value="1"/>
</dbReference>
<dbReference type="Gene3D" id="6.10.160.10">
    <property type="match status" value="1"/>
</dbReference>
<dbReference type="Gene3D" id="1.10.1900.20">
    <property type="entry name" value="Ribosomal protein L20"/>
    <property type="match status" value="1"/>
</dbReference>
<dbReference type="HAMAP" id="MF_00382">
    <property type="entry name" value="Ribosomal_bL20"/>
    <property type="match status" value="1"/>
</dbReference>
<dbReference type="InterPro" id="IPR005813">
    <property type="entry name" value="Ribosomal_bL20"/>
</dbReference>
<dbReference type="InterPro" id="IPR049946">
    <property type="entry name" value="RIBOSOMAL_L20_CS"/>
</dbReference>
<dbReference type="InterPro" id="IPR035566">
    <property type="entry name" value="Ribosomal_protein_bL20_C"/>
</dbReference>
<dbReference type="NCBIfam" id="TIGR01032">
    <property type="entry name" value="rplT_bact"/>
    <property type="match status" value="1"/>
</dbReference>
<dbReference type="PANTHER" id="PTHR10986">
    <property type="entry name" value="39S RIBOSOMAL PROTEIN L20"/>
    <property type="match status" value="1"/>
</dbReference>
<dbReference type="Pfam" id="PF00453">
    <property type="entry name" value="Ribosomal_L20"/>
    <property type="match status" value="1"/>
</dbReference>
<dbReference type="PRINTS" id="PR00062">
    <property type="entry name" value="RIBOSOMALL20"/>
</dbReference>
<dbReference type="SUPFAM" id="SSF74731">
    <property type="entry name" value="Ribosomal protein L20"/>
    <property type="match status" value="1"/>
</dbReference>
<dbReference type="PROSITE" id="PS00937">
    <property type="entry name" value="RIBOSOMAL_L20"/>
    <property type="match status" value="1"/>
</dbReference>
<protein>
    <recommendedName>
        <fullName evidence="1">Large ribosomal subunit protein bL20</fullName>
    </recommendedName>
    <alternativeName>
        <fullName evidence="2">50S ribosomal protein L20</fullName>
    </alternativeName>
</protein>
<comment type="function">
    <text evidence="1">Binds directly to 23S ribosomal RNA and is necessary for the in vitro assembly process of the 50S ribosomal subunit. It is not involved in the protein synthesizing functions of that subunit.</text>
</comment>
<comment type="similarity">
    <text evidence="1">Belongs to the bacterial ribosomal protein bL20 family.</text>
</comment>
<keyword id="KW-0687">Ribonucleoprotein</keyword>
<keyword id="KW-0689">Ribosomal protein</keyword>
<keyword id="KW-0694">RNA-binding</keyword>
<keyword id="KW-0699">rRNA-binding</keyword>
<proteinExistence type="inferred from homology"/>
<reference key="1">
    <citation type="journal article" date="2006" name="Science">
        <title>Genomic islands and the ecology and evolution of Prochlorococcus.</title>
        <authorList>
            <person name="Coleman M.L."/>
            <person name="Sullivan M.B."/>
            <person name="Martiny A.C."/>
            <person name="Steglich C."/>
            <person name="Barry K."/>
            <person name="Delong E.F."/>
            <person name="Chisholm S.W."/>
        </authorList>
    </citation>
    <scope>NUCLEOTIDE SEQUENCE [LARGE SCALE GENOMIC DNA]</scope>
    <source>
        <strain>MIT 9312</strain>
    </source>
</reference>
<evidence type="ECO:0000255" key="1">
    <source>
        <dbReference type="HAMAP-Rule" id="MF_00382"/>
    </source>
</evidence>
<evidence type="ECO:0000305" key="2"/>